<reference key="1">
    <citation type="journal article" date="2009" name="Genome Biol.">
        <title>Genomic and genetic analyses of diversity and plant interactions of Pseudomonas fluorescens.</title>
        <authorList>
            <person name="Silby M.W."/>
            <person name="Cerdeno-Tarraga A.M."/>
            <person name="Vernikos G.S."/>
            <person name="Giddens S.R."/>
            <person name="Jackson R.W."/>
            <person name="Preston G.M."/>
            <person name="Zhang X.-X."/>
            <person name="Moon C.D."/>
            <person name="Gehrig S.M."/>
            <person name="Godfrey S.A.C."/>
            <person name="Knight C.G."/>
            <person name="Malone J.G."/>
            <person name="Robinson Z."/>
            <person name="Spiers A.J."/>
            <person name="Harris S."/>
            <person name="Challis G.L."/>
            <person name="Yaxley A.M."/>
            <person name="Harris D."/>
            <person name="Seeger K."/>
            <person name="Murphy L."/>
            <person name="Rutter S."/>
            <person name="Squares R."/>
            <person name="Quail M.A."/>
            <person name="Saunders E."/>
            <person name="Mavromatis K."/>
            <person name="Brettin T.S."/>
            <person name="Bentley S.D."/>
            <person name="Hothersall J."/>
            <person name="Stephens E."/>
            <person name="Thomas C.M."/>
            <person name="Parkhill J."/>
            <person name="Levy S.B."/>
            <person name="Rainey P.B."/>
            <person name="Thomson N.R."/>
        </authorList>
    </citation>
    <scope>NUCLEOTIDE SEQUENCE [LARGE SCALE GENOMIC DNA]</scope>
    <source>
        <strain>SBW25</strain>
    </source>
</reference>
<dbReference type="EC" id="2.4.99.28" evidence="2"/>
<dbReference type="EMBL" id="AM181176">
    <property type="protein sequence ID" value="CAY47212.1"/>
    <property type="molecule type" value="Genomic_DNA"/>
</dbReference>
<dbReference type="RefSeq" id="WP_012722295.1">
    <property type="nucleotide sequence ID" value="NC_012660.1"/>
</dbReference>
<dbReference type="SMR" id="C3KCS9"/>
<dbReference type="STRING" id="294.SRM1_04722"/>
<dbReference type="GeneID" id="93462567"/>
<dbReference type="eggNOG" id="COG0772">
    <property type="taxonomic scope" value="Bacteria"/>
</dbReference>
<dbReference type="HOGENOM" id="CLU_029243_1_1_6"/>
<dbReference type="OrthoDB" id="9768187at2"/>
<dbReference type="UniPathway" id="UPA00219"/>
<dbReference type="GO" id="GO:0032153">
    <property type="term" value="C:cell division site"/>
    <property type="evidence" value="ECO:0007669"/>
    <property type="project" value="UniProtKB-UniRule"/>
</dbReference>
<dbReference type="GO" id="GO:0005886">
    <property type="term" value="C:plasma membrane"/>
    <property type="evidence" value="ECO:0007669"/>
    <property type="project" value="UniProtKB-SubCell"/>
</dbReference>
<dbReference type="GO" id="GO:0015648">
    <property type="term" value="F:lipid-linked peptidoglycan transporter activity"/>
    <property type="evidence" value="ECO:0007669"/>
    <property type="project" value="TreeGrafter"/>
</dbReference>
<dbReference type="GO" id="GO:0008955">
    <property type="term" value="F:peptidoglycan glycosyltransferase activity"/>
    <property type="evidence" value="ECO:0007669"/>
    <property type="project" value="UniProtKB-UniRule"/>
</dbReference>
<dbReference type="GO" id="GO:0071555">
    <property type="term" value="P:cell wall organization"/>
    <property type="evidence" value="ECO:0007669"/>
    <property type="project" value="UniProtKB-KW"/>
</dbReference>
<dbReference type="GO" id="GO:0043093">
    <property type="term" value="P:FtsZ-dependent cytokinesis"/>
    <property type="evidence" value="ECO:0007669"/>
    <property type="project" value="UniProtKB-UniRule"/>
</dbReference>
<dbReference type="GO" id="GO:0009252">
    <property type="term" value="P:peptidoglycan biosynthetic process"/>
    <property type="evidence" value="ECO:0007669"/>
    <property type="project" value="UniProtKB-UniRule"/>
</dbReference>
<dbReference type="GO" id="GO:0008360">
    <property type="term" value="P:regulation of cell shape"/>
    <property type="evidence" value="ECO:0007669"/>
    <property type="project" value="UniProtKB-KW"/>
</dbReference>
<dbReference type="HAMAP" id="MF_00913">
    <property type="entry name" value="PGT_FtsW_proteobact"/>
    <property type="match status" value="1"/>
</dbReference>
<dbReference type="InterPro" id="IPR018365">
    <property type="entry name" value="Cell_cycle_FtsW-rel_CS"/>
</dbReference>
<dbReference type="InterPro" id="IPR013437">
    <property type="entry name" value="FtsW"/>
</dbReference>
<dbReference type="InterPro" id="IPR001182">
    <property type="entry name" value="FtsW/RodA"/>
</dbReference>
<dbReference type="NCBIfam" id="TIGR02614">
    <property type="entry name" value="ftsW"/>
    <property type="match status" value="1"/>
</dbReference>
<dbReference type="PANTHER" id="PTHR30474">
    <property type="entry name" value="CELL CYCLE PROTEIN"/>
    <property type="match status" value="1"/>
</dbReference>
<dbReference type="PANTHER" id="PTHR30474:SF2">
    <property type="entry name" value="PEPTIDOGLYCAN GLYCOSYLTRANSFERASE FTSW-RELATED"/>
    <property type="match status" value="1"/>
</dbReference>
<dbReference type="Pfam" id="PF01098">
    <property type="entry name" value="FTSW_RODA_SPOVE"/>
    <property type="match status" value="1"/>
</dbReference>
<dbReference type="PROSITE" id="PS00428">
    <property type="entry name" value="FTSW_RODA_SPOVE"/>
    <property type="match status" value="1"/>
</dbReference>
<name>FTSW_PSEFS</name>
<keyword id="KW-0131">Cell cycle</keyword>
<keyword id="KW-0132">Cell division</keyword>
<keyword id="KW-0997">Cell inner membrane</keyword>
<keyword id="KW-1003">Cell membrane</keyword>
<keyword id="KW-0133">Cell shape</keyword>
<keyword id="KW-0961">Cell wall biogenesis/degradation</keyword>
<keyword id="KW-0328">Glycosyltransferase</keyword>
<keyword id="KW-0472">Membrane</keyword>
<keyword id="KW-0573">Peptidoglycan synthesis</keyword>
<keyword id="KW-0808">Transferase</keyword>
<keyword id="KW-0812">Transmembrane</keyword>
<keyword id="KW-1133">Transmembrane helix</keyword>
<evidence type="ECO:0000255" key="1"/>
<evidence type="ECO:0000255" key="2">
    <source>
        <dbReference type="HAMAP-Rule" id="MF_00913"/>
    </source>
</evidence>
<organism>
    <name type="scientific">Pseudomonas fluorescens (strain SBW25)</name>
    <dbReference type="NCBI Taxonomy" id="216595"/>
    <lineage>
        <taxon>Bacteria</taxon>
        <taxon>Pseudomonadati</taxon>
        <taxon>Pseudomonadota</taxon>
        <taxon>Gammaproteobacteria</taxon>
        <taxon>Pseudomonadales</taxon>
        <taxon>Pseudomonadaceae</taxon>
        <taxon>Pseudomonas</taxon>
    </lineage>
</organism>
<protein>
    <recommendedName>
        <fullName evidence="2">Probable peptidoglycan glycosyltransferase FtsW</fullName>
        <shortName evidence="2">PGT</shortName>
        <ecNumber evidence="2">2.4.99.28</ecNumber>
    </recommendedName>
    <alternativeName>
        <fullName evidence="2">Cell division protein FtsW</fullName>
    </alternativeName>
    <alternativeName>
        <fullName evidence="2">Cell wall polymerase</fullName>
    </alternativeName>
    <alternativeName>
        <fullName evidence="2">Peptidoglycan polymerase</fullName>
        <shortName evidence="2">PG polymerase</shortName>
    </alternativeName>
</protein>
<feature type="chain" id="PRO_0000415209" description="Probable peptidoglycan glycosyltransferase FtsW">
    <location>
        <begin position="1"/>
        <end position="407"/>
    </location>
</feature>
<feature type="topological domain" description="Cytoplasmic" evidence="1">
    <location>
        <begin position="1"/>
        <end position="25"/>
    </location>
</feature>
<feature type="transmembrane region" description="Helical" evidence="2">
    <location>
        <begin position="26"/>
        <end position="46"/>
    </location>
</feature>
<feature type="topological domain" description="Periplasmic" evidence="1">
    <location>
        <begin position="47"/>
        <end position="65"/>
    </location>
</feature>
<feature type="transmembrane region" description="Helical" evidence="2">
    <location>
        <begin position="66"/>
        <end position="86"/>
    </location>
</feature>
<feature type="topological domain" description="Cytoplasmic" evidence="1">
    <location>
        <begin position="87"/>
        <end position="89"/>
    </location>
</feature>
<feature type="transmembrane region" description="Helical" evidence="2">
    <location>
        <begin position="90"/>
        <end position="110"/>
    </location>
</feature>
<feature type="topological domain" description="Periplasmic" evidence="1">
    <location>
        <begin position="111"/>
        <end position="119"/>
    </location>
</feature>
<feature type="transmembrane region" description="Helical" evidence="2">
    <location>
        <begin position="120"/>
        <end position="140"/>
    </location>
</feature>
<feature type="topological domain" description="Cytoplasmic" evidence="1">
    <location>
        <begin position="141"/>
        <end position="155"/>
    </location>
</feature>
<feature type="transmembrane region" description="Helical" evidence="2">
    <location>
        <begin position="156"/>
        <end position="176"/>
    </location>
</feature>
<feature type="topological domain" description="Periplasmic" evidence="1">
    <location>
        <begin position="177"/>
        <end position="181"/>
    </location>
</feature>
<feature type="transmembrane region" description="Helical" evidence="2">
    <location>
        <begin position="182"/>
        <end position="202"/>
    </location>
</feature>
<feature type="topological domain" description="Cytoplasmic" evidence="1">
    <location>
        <position position="203"/>
    </location>
</feature>
<feature type="transmembrane region" description="Helical" evidence="2">
    <location>
        <begin position="204"/>
        <end position="224"/>
    </location>
</feature>
<feature type="topological domain" description="Periplasmic" evidence="1">
    <location>
        <begin position="225"/>
        <end position="283"/>
    </location>
</feature>
<feature type="transmembrane region" description="Helical" evidence="2">
    <location>
        <begin position="284"/>
        <end position="304"/>
    </location>
</feature>
<feature type="topological domain" description="Cytoplasmic" evidence="1">
    <location>
        <begin position="305"/>
        <end position="321"/>
    </location>
</feature>
<feature type="transmembrane region" description="Helical" evidence="2">
    <location>
        <begin position="322"/>
        <end position="342"/>
    </location>
</feature>
<feature type="topological domain" description="Periplasmic" evidence="1">
    <location>
        <begin position="343"/>
        <end position="355"/>
    </location>
</feature>
<feature type="transmembrane region" description="Helical" evidence="2">
    <location>
        <begin position="356"/>
        <end position="376"/>
    </location>
</feature>
<feature type="topological domain" description="Cytoplasmic" evidence="1">
    <location>
        <begin position="377"/>
        <end position="407"/>
    </location>
</feature>
<gene>
    <name evidence="2" type="primary">ftsW</name>
    <name type="ordered locus">PFLU_0946</name>
</gene>
<comment type="function">
    <text evidence="2">Peptidoglycan polymerase that is essential for cell division.</text>
</comment>
<comment type="catalytic activity">
    <reaction evidence="2">
        <text>[GlcNAc-(1-&gt;4)-Mur2Ac(oyl-L-Ala-gamma-D-Glu-L-Lys-D-Ala-D-Ala)](n)-di-trans,octa-cis-undecaprenyl diphosphate + beta-D-GlcNAc-(1-&gt;4)-Mur2Ac(oyl-L-Ala-gamma-D-Glu-L-Lys-D-Ala-D-Ala)-di-trans,octa-cis-undecaprenyl diphosphate = [GlcNAc-(1-&gt;4)-Mur2Ac(oyl-L-Ala-gamma-D-Glu-L-Lys-D-Ala-D-Ala)](n+1)-di-trans,octa-cis-undecaprenyl diphosphate + di-trans,octa-cis-undecaprenyl diphosphate + H(+)</text>
        <dbReference type="Rhea" id="RHEA:23708"/>
        <dbReference type="Rhea" id="RHEA-COMP:9602"/>
        <dbReference type="Rhea" id="RHEA-COMP:9603"/>
        <dbReference type="ChEBI" id="CHEBI:15378"/>
        <dbReference type="ChEBI" id="CHEBI:58405"/>
        <dbReference type="ChEBI" id="CHEBI:60033"/>
        <dbReference type="ChEBI" id="CHEBI:78435"/>
        <dbReference type="EC" id="2.4.99.28"/>
    </reaction>
</comment>
<comment type="pathway">
    <text evidence="2">Cell wall biogenesis; peptidoglycan biosynthesis.</text>
</comment>
<comment type="subcellular location">
    <subcellularLocation>
        <location evidence="2">Cell inner membrane</location>
        <topology evidence="2">Multi-pass membrane protein</topology>
    </subcellularLocation>
    <text evidence="2">Localizes to the division septum.</text>
</comment>
<comment type="similarity">
    <text evidence="2">Belongs to the SEDS family. FtsW subfamily.</text>
</comment>
<proteinExistence type="inferred from homology"/>
<accession>C3KCS9</accession>
<sequence>MSIDFRNIIKPYPSPIITGRGIDLDFPMLAGCLALLGLGLVMITSASSEVAAVQSGNTLYMMIRHLVYLVIGLGACIVTMMIPIATWQRLGWLMLIGAFGLLIMVILPGIGREVNGSMRWIGFGAFNVQPSEIAKVFVVIYLAGYLVRRQKEVRESWMGFFKPFIVLLPMAGLLLMEPDFGATVVMMGAAAAMLFLGGVGLFRFTLMVVLAVAAVTVLVQAQPYRMARLITFTDPWSDQFGSGYQLTQALIAFGRGEWLGVGLGNSVQKQFYLPEAHTDFVFSVLAEELGVVGSLCTVALFVFVCVRGMYIGMWAEKAKQYFAAYVAYGLSFLWIGQFLINIGVNVGLLPTKGLTLPFLSYGGSSLVICCACLGLLLRIEWESRTHLGSEEMEFSESDFAEEPTHGR</sequence>